<feature type="signal peptide" evidence="2">
    <location>
        <begin position="1"/>
        <end position="16"/>
    </location>
</feature>
<feature type="chain" id="PRO_0000254003" description="PLASMODESMATA CALLOSE-BINDING PROTEIN 2">
    <location>
        <begin position="17"/>
        <end position="171"/>
    </location>
</feature>
<feature type="propeptide" id="PRO_0000254004" description="Removed in mature form" evidence="2">
    <location>
        <begin position="172"/>
        <end position="194"/>
    </location>
</feature>
<feature type="region of interest" description="Disordered" evidence="3">
    <location>
        <begin position="106"/>
        <end position="140"/>
    </location>
</feature>
<feature type="compositionally biased region" description="Low complexity" evidence="3">
    <location>
        <begin position="106"/>
        <end position="116"/>
    </location>
</feature>
<feature type="compositionally biased region" description="Polar residues" evidence="3">
    <location>
        <begin position="117"/>
        <end position="140"/>
    </location>
</feature>
<feature type="lipid moiety-binding region" description="GPI-anchor amidated serine" evidence="2">
    <location>
        <position position="171"/>
    </location>
</feature>
<feature type="glycosylation site" description="N-linked (GlcNAc...) asparagine" evidence="2">
    <location>
        <position position="85"/>
    </location>
</feature>
<feature type="glycosylation site" description="N-linked (GlcNAc...) asparagine" evidence="2">
    <location>
        <position position="154"/>
    </location>
</feature>
<feature type="disulfide bond" evidence="1">
    <location>
        <begin position="22"/>
        <end position="84"/>
    </location>
</feature>
<feature type="sequence conflict" description="In Ref. 5; AAM64809." evidence="5" ref="5">
    <original>P</original>
    <variation>A</variation>
    <location>
        <position position="3"/>
    </location>
</feature>
<feature type="sequence conflict" description="In Ref. 5; AAM64809." evidence="5" ref="5">
    <original>T</original>
    <variation>S</variation>
    <location>
        <position position="17"/>
    </location>
</feature>
<feature type="sequence conflict" description="In Ref. 5; AAM64809." evidence="5" ref="5">
    <original>S</original>
    <variation>T</variation>
    <location>
        <position position="143"/>
    </location>
</feature>
<accession>Q9SD84</accession>
<accession>Q8LBE9</accession>
<evidence type="ECO:0000250" key="1"/>
<evidence type="ECO:0000255" key="2"/>
<evidence type="ECO:0000256" key="3">
    <source>
        <dbReference type="SAM" id="MobiDB-lite"/>
    </source>
</evidence>
<evidence type="ECO:0000269" key="4">
    <source>
    </source>
</evidence>
<evidence type="ECO:0000305" key="5"/>
<dbReference type="EMBL" id="AL133421">
    <property type="protein sequence ID" value="CAB62612.1"/>
    <property type="molecule type" value="Genomic_DNA"/>
</dbReference>
<dbReference type="EMBL" id="CP002688">
    <property type="protein sequence ID" value="AED91233.1"/>
    <property type="molecule type" value="Genomic_DNA"/>
</dbReference>
<dbReference type="EMBL" id="BT003716">
    <property type="protein sequence ID" value="AAO39944.1"/>
    <property type="molecule type" value="mRNA"/>
</dbReference>
<dbReference type="EMBL" id="AK118578">
    <property type="protein sequence ID" value="BAC43178.1"/>
    <property type="molecule type" value="mRNA"/>
</dbReference>
<dbReference type="EMBL" id="AY087253">
    <property type="protein sequence ID" value="AAM64809.1"/>
    <property type="molecule type" value="mRNA"/>
</dbReference>
<dbReference type="PIR" id="T45625">
    <property type="entry name" value="T45625"/>
</dbReference>
<dbReference type="SMR" id="Q9SD84"/>
<dbReference type="FunCoup" id="Q9SD84">
    <property type="interactions" value="287"/>
</dbReference>
<dbReference type="IntAct" id="Q9SD84">
    <property type="interactions" value="1"/>
</dbReference>
<dbReference type="STRING" id="3702.Q9SD84"/>
<dbReference type="CAZy" id="CBM43">
    <property type="family name" value="Carbohydrate-Binding Module Family 43"/>
</dbReference>
<dbReference type="TCDB" id="1.I.2.1.1">
    <property type="family name" value="the plant plasmodesmata (ppd) family"/>
</dbReference>
<dbReference type="GlyCosmos" id="Q9SD84">
    <property type="glycosylation" value="2 sites, No reported glycans"/>
</dbReference>
<dbReference type="GlyGen" id="Q9SD84">
    <property type="glycosylation" value="4 sites"/>
</dbReference>
<dbReference type="PaxDb" id="3702-AT5G08000.1"/>
<dbReference type="EnsemblPlants" id="AT5G08000.1">
    <property type="protein sequence ID" value="AT5G08000.1"/>
    <property type="gene ID" value="AT5G08000"/>
</dbReference>
<dbReference type="GeneID" id="830694"/>
<dbReference type="Gramene" id="AT5G08000.1">
    <property type="protein sequence ID" value="AT5G08000.1"/>
    <property type="gene ID" value="AT5G08000"/>
</dbReference>
<dbReference type="KEGG" id="ath:AT5G08000"/>
<dbReference type="Araport" id="AT5G08000"/>
<dbReference type="TAIR" id="AT5G08000">
    <property type="gene designation" value="E13L3"/>
</dbReference>
<dbReference type="eggNOG" id="ENOG502RYRZ">
    <property type="taxonomic scope" value="Eukaryota"/>
</dbReference>
<dbReference type="HOGENOM" id="CLU_031666_1_0_1"/>
<dbReference type="InParanoid" id="Q9SD84"/>
<dbReference type="OMA" id="VASDWCV"/>
<dbReference type="PhylomeDB" id="Q9SD84"/>
<dbReference type="PRO" id="PR:Q9SD84"/>
<dbReference type="Proteomes" id="UP000006548">
    <property type="component" value="Chromosome 5"/>
</dbReference>
<dbReference type="ExpressionAtlas" id="Q9SD84">
    <property type="expression patterns" value="baseline and differential"/>
</dbReference>
<dbReference type="GO" id="GO:0005886">
    <property type="term" value="C:plasma membrane"/>
    <property type="evidence" value="ECO:0007669"/>
    <property type="project" value="UniProtKB-SubCell"/>
</dbReference>
<dbReference type="GO" id="GO:0009506">
    <property type="term" value="C:plasmodesma"/>
    <property type="evidence" value="ECO:0000314"/>
    <property type="project" value="TAIR"/>
</dbReference>
<dbReference type="GO" id="GO:0098552">
    <property type="term" value="C:side of membrane"/>
    <property type="evidence" value="ECO:0007669"/>
    <property type="project" value="UniProtKB-KW"/>
</dbReference>
<dbReference type="GO" id="GO:0001872">
    <property type="term" value="F:(1-&gt;3)-beta-D-glucan binding"/>
    <property type="evidence" value="ECO:0000314"/>
    <property type="project" value="TAIR"/>
</dbReference>
<dbReference type="GO" id="GO:0030247">
    <property type="term" value="F:polysaccharide binding"/>
    <property type="evidence" value="ECO:0000314"/>
    <property type="project" value="TAIR"/>
</dbReference>
<dbReference type="GO" id="GO:0009408">
    <property type="term" value="P:response to heat"/>
    <property type="evidence" value="ECO:0000270"/>
    <property type="project" value="UniProtKB"/>
</dbReference>
<dbReference type="FunFam" id="1.20.58.1040:FF:000001">
    <property type="entry name" value="Glucan endo-1,3-beta-glucosidase 4"/>
    <property type="match status" value="1"/>
</dbReference>
<dbReference type="Gene3D" id="1.20.58.1040">
    <property type="match status" value="1"/>
</dbReference>
<dbReference type="InterPro" id="IPR012946">
    <property type="entry name" value="X8"/>
</dbReference>
<dbReference type="InterPro" id="IPR044788">
    <property type="entry name" value="X8_dom_prot"/>
</dbReference>
<dbReference type="PANTHER" id="PTHR31044">
    <property type="entry name" value="BETA-1,3 GLUCANASE"/>
    <property type="match status" value="1"/>
</dbReference>
<dbReference type="PANTHER" id="PTHR31044:SF137">
    <property type="entry name" value="PLASMODESMATA CALLOSE-BINDING PROTEIN 2"/>
    <property type="match status" value="1"/>
</dbReference>
<dbReference type="Pfam" id="PF07983">
    <property type="entry name" value="X8"/>
    <property type="match status" value="1"/>
</dbReference>
<dbReference type="SMART" id="SM00768">
    <property type="entry name" value="X8"/>
    <property type="match status" value="1"/>
</dbReference>
<gene>
    <name type="primary">PDCB2</name>
    <name type="ordered locus">At5g08000</name>
    <name type="ORF">F13G24.200</name>
</gene>
<comment type="function">
    <text evidence="4">Able to bind (1-&gt;3)-beta-D-glucans (laminarin).</text>
</comment>
<comment type="subcellular location">
    <subcellularLocation>
        <location evidence="4">Cell membrane</location>
        <topology evidence="4">Lipid-anchor</topology>
        <topology evidence="4">GPI-anchor</topology>
    </subcellularLocation>
    <subcellularLocation>
        <location evidence="4">Cell junction</location>
        <location evidence="4">Plasmodesma</location>
    </subcellularLocation>
</comment>
<comment type="tissue specificity">
    <text evidence="4">Expressed in the shoot apical region and in young leaves but also detected in the laminar and vasculature of mature leaves.</text>
</comment>
<comment type="induction">
    <text evidence="4">Down-regulated by heat treatment.</text>
</comment>
<comment type="PTM">
    <text evidence="1">Contains two additional disulfide bonds.</text>
</comment>
<organism>
    <name type="scientific">Arabidopsis thaliana</name>
    <name type="common">Mouse-ear cress</name>
    <dbReference type="NCBI Taxonomy" id="3702"/>
    <lineage>
        <taxon>Eukaryota</taxon>
        <taxon>Viridiplantae</taxon>
        <taxon>Streptophyta</taxon>
        <taxon>Embryophyta</taxon>
        <taxon>Tracheophyta</taxon>
        <taxon>Spermatophyta</taxon>
        <taxon>Magnoliopsida</taxon>
        <taxon>eudicotyledons</taxon>
        <taxon>Gunneridae</taxon>
        <taxon>Pentapetalae</taxon>
        <taxon>rosids</taxon>
        <taxon>malvids</taxon>
        <taxon>Brassicales</taxon>
        <taxon>Brassicaceae</taxon>
        <taxon>Camelineae</taxon>
        <taxon>Arabidopsis</taxon>
    </lineage>
</organism>
<sequence length="194" mass="19900">MAPLVLYLLTLLMAGHTSASWCVCKTGLSDSVLQKTLDYACGNGADCNPTHPKGSCFNPDNVRAHCNYAVNSFFQKKGQASESCNFTGTATLTTTDPSYTGCAFPSSASGSSGSGSTTVTPGKNSPKGSNSITTFPGGNSPYSGTPSTGLLGGNITDATGTGLNPDYSTESSGFALYYSNNLLLTGFCSLVMML</sequence>
<proteinExistence type="evidence at protein level"/>
<reference key="1">
    <citation type="journal article" date="2000" name="Nature">
        <title>Sequence and analysis of chromosome 5 of the plant Arabidopsis thaliana.</title>
        <authorList>
            <person name="Tabata S."/>
            <person name="Kaneko T."/>
            <person name="Nakamura Y."/>
            <person name="Kotani H."/>
            <person name="Kato T."/>
            <person name="Asamizu E."/>
            <person name="Miyajima N."/>
            <person name="Sasamoto S."/>
            <person name="Kimura T."/>
            <person name="Hosouchi T."/>
            <person name="Kawashima K."/>
            <person name="Kohara M."/>
            <person name="Matsumoto M."/>
            <person name="Matsuno A."/>
            <person name="Muraki A."/>
            <person name="Nakayama S."/>
            <person name="Nakazaki N."/>
            <person name="Naruo K."/>
            <person name="Okumura S."/>
            <person name="Shinpo S."/>
            <person name="Takeuchi C."/>
            <person name="Wada T."/>
            <person name="Watanabe A."/>
            <person name="Yamada M."/>
            <person name="Yasuda M."/>
            <person name="Sato S."/>
            <person name="de la Bastide M."/>
            <person name="Huang E."/>
            <person name="Spiegel L."/>
            <person name="Gnoj L."/>
            <person name="O'Shaughnessy A."/>
            <person name="Preston R."/>
            <person name="Habermann K."/>
            <person name="Murray J."/>
            <person name="Johnson D."/>
            <person name="Rohlfing T."/>
            <person name="Nelson J."/>
            <person name="Stoneking T."/>
            <person name="Pepin K."/>
            <person name="Spieth J."/>
            <person name="Sekhon M."/>
            <person name="Armstrong J."/>
            <person name="Becker M."/>
            <person name="Belter E."/>
            <person name="Cordum H."/>
            <person name="Cordes M."/>
            <person name="Courtney L."/>
            <person name="Courtney W."/>
            <person name="Dante M."/>
            <person name="Du H."/>
            <person name="Edwards J."/>
            <person name="Fryman J."/>
            <person name="Haakensen B."/>
            <person name="Lamar E."/>
            <person name="Latreille P."/>
            <person name="Leonard S."/>
            <person name="Meyer R."/>
            <person name="Mulvaney E."/>
            <person name="Ozersky P."/>
            <person name="Riley A."/>
            <person name="Strowmatt C."/>
            <person name="Wagner-McPherson C."/>
            <person name="Wollam A."/>
            <person name="Yoakum M."/>
            <person name="Bell M."/>
            <person name="Dedhia N."/>
            <person name="Parnell L."/>
            <person name="Shah R."/>
            <person name="Rodriguez M."/>
            <person name="Hoon See L."/>
            <person name="Vil D."/>
            <person name="Baker J."/>
            <person name="Kirchoff K."/>
            <person name="Toth K."/>
            <person name="King L."/>
            <person name="Bahret A."/>
            <person name="Miller B."/>
            <person name="Marra M.A."/>
            <person name="Martienssen R."/>
            <person name="McCombie W.R."/>
            <person name="Wilson R.K."/>
            <person name="Murphy G."/>
            <person name="Bancroft I."/>
            <person name="Volckaert G."/>
            <person name="Wambutt R."/>
            <person name="Duesterhoeft A."/>
            <person name="Stiekema W."/>
            <person name="Pohl T."/>
            <person name="Entian K.-D."/>
            <person name="Terryn N."/>
            <person name="Hartley N."/>
            <person name="Bent E."/>
            <person name="Johnson S."/>
            <person name="Langham S.-A."/>
            <person name="McCullagh B."/>
            <person name="Robben J."/>
            <person name="Grymonprez B."/>
            <person name="Zimmermann W."/>
            <person name="Ramsperger U."/>
            <person name="Wedler H."/>
            <person name="Balke K."/>
            <person name="Wedler E."/>
            <person name="Peters S."/>
            <person name="van Staveren M."/>
            <person name="Dirkse W."/>
            <person name="Mooijman P."/>
            <person name="Klein Lankhorst R."/>
            <person name="Weitzenegger T."/>
            <person name="Bothe G."/>
            <person name="Rose M."/>
            <person name="Hauf J."/>
            <person name="Berneiser S."/>
            <person name="Hempel S."/>
            <person name="Feldpausch M."/>
            <person name="Lamberth S."/>
            <person name="Villarroel R."/>
            <person name="Gielen J."/>
            <person name="Ardiles W."/>
            <person name="Bents O."/>
            <person name="Lemcke K."/>
            <person name="Kolesov G."/>
            <person name="Mayer K.F.X."/>
            <person name="Rudd S."/>
            <person name="Schoof H."/>
            <person name="Schueller C."/>
            <person name="Zaccaria P."/>
            <person name="Mewes H.-W."/>
            <person name="Bevan M."/>
            <person name="Fransz P.F."/>
        </authorList>
    </citation>
    <scope>NUCLEOTIDE SEQUENCE [LARGE SCALE GENOMIC DNA]</scope>
    <source>
        <strain>cv. Columbia</strain>
    </source>
</reference>
<reference key="2">
    <citation type="journal article" date="2017" name="Plant J.">
        <title>Araport11: a complete reannotation of the Arabidopsis thaliana reference genome.</title>
        <authorList>
            <person name="Cheng C.Y."/>
            <person name="Krishnakumar V."/>
            <person name="Chan A.P."/>
            <person name="Thibaud-Nissen F."/>
            <person name="Schobel S."/>
            <person name="Town C.D."/>
        </authorList>
    </citation>
    <scope>GENOME REANNOTATION</scope>
    <source>
        <strain>cv. Columbia</strain>
    </source>
</reference>
<reference key="3">
    <citation type="journal article" date="2003" name="Science">
        <title>Empirical analysis of transcriptional activity in the Arabidopsis genome.</title>
        <authorList>
            <person name="Yamada K."/>
            <person name="Lim J."/>
            <person name="Dale J.M."/>
            <person name="Chen H."/>
            <person name="Shinn P."/>
            <person name="Palm C.J."/>
            <person name="Southwick A.M."/>
            <person name="Wu H.C."/>
            <person name="Kim C.J."/>
            <person name="Nguyen M."/>
            <person name="Pham P.K."/>
            <person name="Cheuk R.F."/>
            <person name="Karlin-Newmann G."/>
            <person name="Liu S.X."/>
            <person name="Lam B."/>
            <person name="Sakano H."/>
            <person name="Wu T."/>
            <person name="Yu G."/>
            <person name="Miranda M."/>
            <person name="Quach H.L."/>
            <person name="Tripp M."/>
            <person name="Chang C.H."/>
            <person name="Lee J.M."/>
            <person name="Toriumi M.J."/>
            <person name="Chan M.M."/>
            <person name="Tang C.C."/>
            <person name="Onodera C.S."/>
            <person name="Deng J.M."/>
            <person name="Akiyama K."/>
            <person name="Ansari Y."/>
            <person name="Arakawa T."/>
            <person name="Banh J."/>
            <person name="Banno F."/>
            <person name="Bowser L."/>
            <person name="Brooks S.Y."/>
            <person name="Carninci P."/>
            <person name="Chao Q."/>
            <person name="Choy N."/>
            <person name="Enju A."/>
            <person name="Goldsmith A.D."/>
            <person name="Gurjal M."/>
            <person name="Hansen N.F."/>
            <person name="Hayashizaki Y."/>
            <person name="Johnson-Hopson C."/>
            <person name="Hsuan V.W."/>
            <person name="Iida K."/>
            <person name="Karnes M."/>
            <person name="Khan S."/>
            <person name="Koesema E."/>
            <person name="Ishida J."/>
            <person name="Jiang P.X."/>
            <person name="Jones T."/>
            <person name="Kawai J."/>
            <person name="Kamiya A."/>
            <person name="Meyers C."/>
            <person name="Nakajima M."/>
            <person name="Narusaka M."/>
            <person name="Seki M."/>
            <person name="Sakurai T."/>
            <person name="Satou M."/>
            <person name="Tamse R."/>
            <person name="Vaysberg M."/>
            <person name="Wallender E.K."/>
            <person name="Wong C."/>
            <person name="Yamamura Y."/>
            <person name="Yuan S."/>
            <person name="Shinozaki K."/>
            <person name="Davis R.W."/>
            <person name="Theologis A."/>
            <person name="Ecker J.R."/>
        </authorList>
    </citation>
    <scope>NUCLEOTIDE SEQUENCE [LARGE SCALE MRNA]</scope>
    <source>
        <strain>cv. Columbia</strain>
    </source>
</reference>
<reference key="4">
    <citation type="journal article" date="2002" name="Science">
        <title>Functional annotation of a full-length Arabidopsis cDNA collection.</title>
        <authorList>
            <person name="Seki M."/>
            <person name="Narusaka M."/>
            <person name="Kamiya A."/>
            <person name="Ishida J."/>
            <person name="Satou M."/>
            <person name="Sakurai T."/>
            <person name="Nakajima M."/>
            <person name="Enju A."/>
            <person name="Akiyama K."/>
            <person name="Oono Y."/>
            <person name="Muramatsu M."/>
            <person name="Hayashizaki Y."/>
            <person name="Kawai J."/>
            <person name="Carninci P."/>
            <person name="Itoh M."/>
            <person name="Ishii Y."/>
            <person name="Arakawa T."/>
            <person name="Shibata K."/>
            <person name="Shinagawa A."/>
            <person name="Shinozaki K."/>
        </authorList>
    </citation>
    <scope>NUCLEOTIDE SEQUENCE [LARGE SCALE MRNA]</scope>
    <source>
        <strain>cv. Columbia</strain>
    </source>
</reference>
<reference key="5">
    <citation type="submission" date="2002-03" db="EMBL/GenBank/DDBJ databases">
        <title>Full-length cDNA from Arabidopsis thaliana.</title>
        <authorList>
            <person name="Brover V.V."/>
            <person name="Troukhan M.E."/>
            <person name="Alexandrov N.A."/>
            <person name="Lu Y.-P."/>
            <person name="Flavell R.B."/>
            <person name="Feldmann K.A."/>
        </authorList>
    </citation>
    <scope>NUCLEOTIDE SEQUENCE [LARGE SCALE MRNA]</scope>
</reference>
<reference key="6">
    <citation type="journal article" date="2009" name="Plant Cell">
        <title>An Arabidopsis GPI-anchor plasmodesmal neck protein with callose binding activity and potential to regulate cell-to-cell trafficking.</title>
        <authorList>
            <person name="Simpson C."/>
            <person name="Thomas C."/>
            <person name="Findlay K."/>
            <person name="Bayer E."/>
            <person name="Maule A.J."/>
        </authorList>
    </citation>
    <scope>GENE FAMILY</scope>
    <scope>NOMENCLATURE</scope>
    <scope>FUNCTION</scope>
    <scope>SUBCELLULAR LOCATION</scope>
    <scope>TISSUE SPECIFICITY</scope>
    <scope>INDUCTION BY HEAT</scope>
    <scope>GPI-ANCHOR</scope>
</reference>
<name>PDCB2_ARATH</name>
<protein>
    <recommendedName>
        <fullName>PLASMODESMATA CALLOSE-BINDING PROTEIN 2</fullName>
        <shortName>AtPDCB2</shortName>
    </recommendedName>
    <alternativeName>
        <fullName>Glucan endo-1,3-beta-glucosidase-like protein 3</fullName>
    </alternativeName>
</protein>
<keyword id="KW-0965">Cell junction</keyword>
<keyword id="KW-1003">Cell membrane</keyword>
<keyword id="KW-1015">Disulfide bond</keyword>
<keyword id="KW-0325">Glycoprotein</keyword>
<keyword id="KW-0336">GPI-anchor</keyword>
<keyword id="KW-0449">Lipoprotein</keyword>
<keyword id="KW-0472">Membrane</keyword>
<keyword id="KW-1185">Reference proteome</keyword>
<keyword id="KW-0732">Signal</keyword>